<evidence type="ECO:0000255" key="1">
    <source>
        <dbReference type="PROSITE-ProRule" id="PRU00660"/>
    </source>
</evidence>
<evidence type="ECO:0000269" key="2">
    <source>
    </source>
</evidence>
<evidence type="ECO:0000269" key="3">
    <source>
    </source>
</evidence>
<evidence type="ECO:0000269" key="4">
    <source>
    </source>
</evidence>
<evidence type="ECO:0000269" key="5">
    <source>
    </source>
</evidence>
<evidence type="ECO:0000269" key="6">
    <source>
    </source>
</evidence>
<evidence type="ECO:0000305" key="7"/>
<evidence type="ECO:0000305" key="8">
    <source>
    </source>
</evidence>
<evidence type="ECO:0007829" key="9">
    <source>
        <dbReference type="PDB" id="2FZI"/>
    </source>
</evidence>
<evidence type="ECO:0007829" key="10">
    <source>
        <dbReference type="PDB" id="3NZB"/>
    </source>
</evidence>
<evidence type="ECO:0007829" key="11">
    <source>
        <dbReference type="PDB" id="3TD8"/>
    </source>
</evidence>
<evidence type="ECO:0007829" key="12">
    <source>
        <dbReference type="PDB" id="4IXF"/>
    </source>
</evidence>
<accession>P16184</accession>
<sequence length="206" mass="23884">MNQQKSLTLIVALTTSYGIGRSNSLPWKLKKEISYFKRVTSFVPTFDSFESMNVVLMGRKTWESIPLQFRPLKGRINVVITRNESLDLGNGIHSAKSLDHALELLYRTYGSESSVQINRIFVIGGAQLYKAAMDHPKLDRIMATIIYKDIHCDVFFPLKFRDKEWSSVWKKEKHSDLESWVGTKVPHGKINEDGFDYEFEMWTRDL</sequence>
<dbReference type="EC" id="1.5.1.3"/>
<dbReference type="EMBL" id="M26495">
    <property type="protein sequence ID" value="AAA33787.1"/>
    <property type="molecule type" value="Genomic_DNA"/>
</dbReference>
<dbReference type="EMBL" id="M26496">
    <property type="protein sequence ID" value="AAA33788.1"/>
    <property type="molecule type" value="mRNA"/>
</dbReference>
<dbReference type="PIR" id="A36177">
    <property type="entry name" value="A36177"/>
</dbReference>
<dbReference type="PDB" id="1CD2">
    <property type="method" value="X-ray"/>
    <property type="resolution" value="2.20 A"/>
    <property type="chains" value="A=1-206"/>
</dbReference>
<dbReference type="PDB" id="1DAJ">
    <property type="method" value="X-ray"/>
    <property type="resolution" value="2.30 A"/>
    <property type="chains" value="A=1-206"/>
</dbReference>
<dbReference type="PDB" id="1DYR">
    <property type="method" value="X-ray"/>
    <property type="resolution" value="1.86 A"/>
    <property type="chains" value="A=1-206"/>
</dbReference>
<dbReference type="PDB" id="1E26">
    <property type="method" value="X-ray"/>
    <property type="resolution" value="2.00 A"/>
    <property type="chains" value="A=1-206"/>
</dbReference>
<dbReference type="PDB" id="1KLK">
    <property type="method" value="X-ray"/>
    <property type="resolution" value="2.30 A"/>
    <property type="chains" value="A=1-206"/>
</dbReference>
<dbReference type="PDB" id="1LY3">
    <property type="method" value="X-ray"/>
    <property type="resolution" value="1.90 A"/>
    <property type="chains" value="A=1-206"/>
</dbReference>
<dbReference type="PDB" id="1LY4">
    <property type="method" value="X-ray"/>
    <property type="resolution" value="2.10 A"/>
    <property type="chains" value="A=1-206"/>
</dbReference>
<dbReference type="PDB" id="1S3Y">
    <property type="method" value="X-ray"/>
    <property type="resolution" value="2.25 A"/>
    <property type="chains" value="A=1-206"/>
</dbReference>
<dbReference type="PDB" id="1VJ3">
    <property type="method" value="X-ray"/>
    <property type="resolution" value="2.10 A"/>
    <property type="chains" value="A=2-206"/>
</dbReference>
<dbReference type="PDB" id="2CD2">
    <property type="method" value="X-ray"/>
    <property type="resolution" value="1.90 A"/>
    <property type="chains" value="A=1-206"/>
</dbReference>
<dbReference type="PDB" id="2FZH">
    <property type="method" value="X-ray"/>
    <property type="resolution" value="2.10 A"/>
    <property type="chains" value="A=1-206"/>
</dbReference>
<dbReference type="PDB" id="2FZI">
    <property type="method" value="X-ray"/>
    <property type="resolution" value="1.60 A"/>
    <property type="chains" value="A=1-206"/>
</dbReference>
<dbReference type="PDB" id="3CD2">
    <property type="method" value="X-ray"/>
    <property type="resolution" value="2.50 A"/>
    <property type="chains" value="A=1-206"/>
</dbReference>
<dbReference type="PDB" id="3NZ6">
    <property type="method" value="X-ray"/>
    <property type="resolution" value="2.00 A"/>
    <property type="chains" value="X=1-206"/>
</dbReference>
<dbReference type="PDB" id="3NZ9">
    <property type="method" value="X-ray"/>
    <property type="resolution" value="1.80 A"/>
    <property type="chains" value="X=1-206"/>
</dbReference>
<dbReference type="PDB" id="3NZA">
    <property type="method" value="X-ray"/>
    <property type="resolution" value="1.90 A"/>
    <property type="chains" value="X=1-206"/>
</dbReference>
<dbReference type="PDB" id="3NZB">
    <property type="method" value="X-ray"/>
    <property type="resolution" value="1.45 A"/>
    <property type="chains" value="X=1-206"/>
</dbReference>
<dbReference type="PDB" id="3NZC">
    <property type="method" value="X-ray"/>
    <property type="resolution" value="2.00 A"/>
    <property type="chains" value="X=1-206"/>
</dbReference>
<dbReference type="PDB" id="3TD8">
    <property type="method" value="X-ray"/>
    <property type="resolution" value="1.80 A"/>
    <property type="chains" value="A=1-206"/>
</dbReference>
<dbReference type="PDB" id="4CD2">
    <property type="method" value="X-ray"/>
    <property type="resolution" value="2.00 A"/>
    <property type="chains" value="A=1-206"/>
</dbReference>
<dbReference type="PDB" id="4G8Z">
    <property type="method" value="X-ray"/>
    <property type="resolution" value="1.75 A"/>
    <property type="chains" value="X=3-206"/>
</dbReference>
<dbReference type="PDB" id="4IXE">
    <property type="method" value="X-ray"/>
    <property type="resolution" value="1.54 A"/>
    <property type="chains" value="D=1-206"/>
</dbReference>
<dbReference type="PDB" id="4IXF">
    <property type="method" value="X-ray"/>
    <property type="resolution" value="1.70 A"/>
    <property type="chains" value="X=1-206"/>
</dbReference>
<dbReference type="PDB" id="4IXG">
    <property type="method" value="X-ray"/>
    <property type="resolution" value="1.70 A"/>
    <property type="chains" value="X=1-206"/>
</dbReference>
<dbReference type="PDB" id="4QJZ">
    <property type="method" value="X-ray"/>
    <property type="resolution" value="1.61 A"/>
    <property type="chains" value="D=1-206"/>
</dbReference>
<dbReference type="PDBsum" id="1CD2"/>
<dbReference type="PDBsum" id="1DAJ"/>
<dbReference type="PDBsum" id="1DYR"/>
<dbReference type="PDBsum" id="1E26"/>
<dbReference type="PDBsum" id="1KLK"/>
<dbReference type="PDBsum" id="1LY3"/>
<dbReference type="PDBsum" id="1LY4"/>
<dbReference type="PDBsum" id="1S3Y"/>
<dbReference type="PDBsum" id="1VJ3"/>
<dbReference type="PDBsum" id="2CD2"/>
<dbReference type="PDBsum" id="2FZH"/>
<dbReference type="PDBsum" id="2FZI"/>
<dbReference type="PDBsum" id="3CD2"/>
<dbReference type="PDBsum" id="3NZ6"/>
<dbReference type="PDBsum" id="3NZ9"/>
<dbReference type="PDBsum" id="3NZA"/>
<dbReference type="PDBsum" id="3NZB"/>
<dbReference type="PDBsum" id="3NZC"/>
<dbReference type="PDBsum" id="3TD8"/>
<dbReference type="PDBsum" id="4CD2"/>
<dbReference type="PDBsum" id="4G8Z"/>
<dbReference type="PDBsum" id="4IXE"/>
<dbReference type="PDBsum" id="4IXF"/>
<dbReference type="PDBsum" id="4IXG"/>
<dbReference type="PDBsum" id="4QJZ"/>
<dbReference type="SMR" id="P16184"/>
<dbReference type="BindingDB" id="P16184"/>
<dbReference type="ChEMBL" id="CHEMBL1926"/>
<dbReference type="DrugBank" id="DB02427">
    <property type="generic name" value="2,4-Diamino-6-[N-(2',5'-Dimethoxybenzyl)-N-Methylamino]Quinazoline"/>
</dbReference>
<dbReference type="DrugBank" id="DB03987">
    <property type="generic name" value="2,4-Diamino-6-[N-(3',5'-Dimethoxybenzyl)-N-Methylamino]Pyrido[2,3-D]Pyrimidine"/>
</dbReference>
<dbReference type="DrugBank" id="DB02559">
    <property type="generic name" value="6-(Octahydro-1h-Indol-1-Ylmethyl)Decahydroquinazoline-2,4-Diamine"/>
</dbReference>
<dbReference type="DrugBank" id="DB02026">
    <property type="generic name" value="Furo[2,3d]Pyrimidine Antifolate"/>
</dbReference>
<dbReference type="DrugBank" id="DB03461">
    <property type="generic name" value="Nicotinamide adenine dinucleotide phosphate"/>
</dbReference>
<dbReference type="DrugCentral" id="P16184"/>
<dbReference type="VEuPathDB" id="FungiDB:T552_01177"/>
<dbReference type="BRENDA" id="1.5.1.3">
    <property type="organism ID" value="4924"/>
</dbReference>
<dbReference type="SABIO-RK" id="P16184"/>
<dbReference type="UniPathway" id="UPA00077">
    <property type="reaction ID" value="UER00158"/>
</dbReference>
<dbReference type="EvolutionaryTrace" id="P16184"/>
<dbReference type="GO" id="GO:0005739">
    <property type="term" value="C:mitochondrion"/>
    <property type="evidence" value="ECO:0007669"/>
    <property type="project" value="TreeGrafter"/>
</dbReference>
<dbReference type="GO" id="GO:0004146">
    <property type="term" value="F:dihydrofolate reductase activity"/>
    <property type="evidence" value="ECO:0007669"/>
    <property type="project" value="UniProtKB-EC"/>
</dbReference>
<dbReference type="GO" id="GO:0050661">
    <property type="term" value="F:NADP binding"/>
    <property type="evidence" value="ECO:0007669"/>
    <property type="project" value="InterPro"/>
</dbReference>
<dbReference type="GO" id="GO:0046452">
    <property type="term" value="P:dihydrofolate metabolic process"/>
    <property type="evidence" value="ECO:0007669"/>
    <property type="project" value="TreeGrafter"/>
</dbReference>
<dbReference type="GO" id="GO:0046655">
    <property type="term" value="P:folic acid metabolic process"/>
    <property type="evidence" value="ECO:0007669"/>
    <property type="project" value="TreeGrafter"/>
</dbReference>
<dbReference type="GO" id="GO:0006730">
    <property type="term" value="P:one-carbon metabolic process"/>
    <property type="evidence" value="ECO:0007669"/>
    <property type="project" value="UniProtKB-KW"/>
</dbReference>
<dbReference type="GO" id="GO:0046654">
    <property type="term" value="P:tetrahydrofolate biosynthetic process"/>
    <property type="evidence" value="ECO:0007669"/>
    <property type="project" value="UniProtKB-UniPathway"/>
</dbReference>
<dbReference type="CDD" id="cd00209">
    <property type="entry name" value="DHFR"/>
    <property type="match status" value="1"/>
</dbReference>
<dbReference type="Gene3D" id="3.40.430.10">
    <property type="entry name" value="Dihydrofolate Reductase, subunit A"/>
    <property type="match status" value="1"/>
</dbReference>
<dbReference type="InterPro" id="IPR012259">
    <property type="entry name" value="DHFR"/>
</dbReference>
<dbReference type="InterPro" id="IPR024072">
    <property type="entry name" value="DHFR-like_dom_sf"/>
</dbReference>
<dbReference type="InterPro" id="IPR017925">
    <property type="entry name" value="DHFR_CS"/>
</dbReference>
<dbReference type="InterPro" id="IPR001796">
    <property type="entry name" value="DHFR_dom"/>
</dbReference>
<dbReference type="PANTHER" id="PTHR48069">
    <property type="entry name" value="DIHYDROFOLATE REDUCTASE"/>
    <property type="match status" value="1"/>
</dbReference>
<dbReference type="PANTHER" id="PTHR48069:SF3">
    <property type="entry name" value="DIHYDROFOLATE REDUCTASE"/>
    <property type="match status" value="1"/>
</dbReference>
<dbReference type="Pfam" id="PF00186">
    <property type="entry name" value="DHFR_1"/>
    <property type="match status" value="1"/>
</dbReference>
<dbReference type="PRINTS" id="PR00070">
    <property type="entry name" value="DHFR"/>
</dbReference>
<dbReference type="SUPFAM" id="SSF53597">
    <property type="entry name" value="Dihydrofolate reductase-like"/>
    <property type="match status" value="1"/>
</dbReference>
<dbReference type="PROSITE" id="PS00075">
    <property type="entry name" value="DHFR_1"/>
    <property type="match status" value="1"/>
</dbReference>
<dbReference type="PROSITE" id="PS51330">
    <property type="entry name" value="DHFR_2"/>
    <property type="match status" value="1"/>
</dbReference>
<feature type="chain" id="PRO_0000186376" description="Dihydrofolate reductase">
    <location>
        <begin position="1"/>
        <end position="206"/>
    </location>
</feature>
<feature type="domain" description="DHFR" evidence="1">
    <location>
        <begin position="6"/>
        <end position="204"/>
    </location>
</feature>
<feature type="binding site" evidence="2 3 4 5 6">
    <location>
        <position position="12"/>
    </location>
    <ligand>
        <name>NADP(+)</name>
        <dbReference type="ChEBI" id="CHEBI:58349"/>
    </ligand>
</feature>
<feature type="binding site" evidence="2 3 4 5 6">
    <location>
        <begin position="18"/>
        <end position="24"/>
    </location>
    <ligand>
        <name>NADP(+)</name>
        <dbReference type="ChEBI" id="CHEBI:58349"/>
    </ligand>
</feature>
<feature type="binding site" evidence="8">
    <location>
        <begin position="32"/>
        <end position="37"/>
    </location>
    <ligand>
        <name>substrate</name>
    </ligand>
</feature>
<feature type="binding site" evidence="2 3 4 5 6">
    <location>
        <begin position="59"/>
        <end position="61"/>
    </location>
    <ligand>
        <name>NADP(+)</name>
        <dbReference type="ChEBI" id="CHEBI:58349"/>
    </ligand>
</feature>
<feature type="binding site" evidence="8">
    <location>
        <position position="75"/>
    </location>
    <ligand>
        <name>substrate</name>
    </ligand>
</feature>
<feature type="binding site" evidence="2 3 4 5 6">
    <location>
        <begin position="81"/>
        <end position="83"/>
    </location>
    <ligand>
        <name>NADP(+)</name>
        <dbReference type="ChEBI" id="CHEBI:58349"/>
    </ligand>
</feature>
<feature type="binding site" evidence="2 3 4 5 6">
    <location>
        <begin position="124"/>
        <end position="131"/>
    </location>
    <ligand>
        <name>NADP(+)</name>
        <dbReference type="ChEBI" id="CHEBI:58349"/>
    </ligand>
</feature>
<feature type="strand" evidence="9">
    <location>
        <begin position="3"/>
        <end position="5"/>
    </location>
</feature>
<feature type="strand" evidence="10">
    <location>
        <begin position="7"/>
        <end position="14"/>
    </location>
</feature>
<feature type="strand" evidence="10">
    <location>
        <begin position="18"/>
        <end position="21"/>
    </location>
</feature>
<feature type="helix" evidence="10">
    <location>
        <begin position="30"/>
        <end position="41"/>
    </location>
</feature>
<feature type="helix" evidence="10">
    <location>
        <begin position="47"/>
        <end position="49"/>
    </location>
</feature>
<feature type="strand" evidence="10">
    <location>
        <begin position="51"/>
        <end position="58"/>
    </location>
</feature>
<feature type="helix" evidence="10">
    <location>
        <begin position="59"/>
        <end position="64"/>
    </location>
</feature>
<feature type="helix" evidence="10">
    <location>
        <begin position="67"/>
        <end position="69"/>
    </location>
</feature>
<feature type="strand" evidence="10">
    <location>
        <begin position="75"/>
        <end position="80"/>
    </location>
</feature>
<feature type="strand" evidence="12">
    <location>
        <begin position="89"/>
        <end position="91"/>
    </location>
</feature>
<feature type="strand" evidence="10">
    <location>
        <begin position="93"/>
        <end position="97"/>
    </location>
</feature>
<feature type="helix" evidence="10">
    <location>
        <begin position="98"/>
        <end position="108"/>
    </location>
</feature>
<feature type="strand" evidence="10">
    <location>
        <begin position="111"/>
        <end position="122"/>
    </location>
</feature>
<feature type="helix" evidence="10">
    <location>
        <begin position="126"/>
        <end position="134"/>
    </location>
</feature>
<feature type="strand" evidence="10">
    <location>
        <begin position="138"/>
        <end position="146"/>
    </location>
</feature>
<feature type="strand" evidence="10">
    <location>
        <begin position="153"/>
        <end position="155"/>
    </location>
</feature>
<feature type="helix" evidence="10">
    <location>
        <begin position="163"/>
        <end position="165"/>
    </location>
</feature>
<feature type="turn" evidence="10">
    <location>
        <begin position="166"/>
        <end position="168"/>
    </location>
</feature>
<feature type="strand" evidence="11">
    <location>
        <begin position="169"/>
        <end position="171"/>
    </location>
</feature>
<feature type="helix" evidence="10">
    <location>
        <begin position="174"/>
        <end position="181"/>
    </location>
</feature>
<feature type="strand" evidence="10">
    <location>
        <begin position="190"/>
        <end position="192"/>
    </location>
</feature>
<feature type="strand" evidence="10">
    <location>
        <begin position="195"/>
        <end position="203"/>
    </location>
</feature>
<reference key="1">
    <citation type="journal article" date="1989" name="Proc. Natl. Acad. Sci. U.S.A.">
        <title>Isolation and expression of the Pneumocystis carinii dihydrofolate reductase gene.</title>
        <authorList>
            <person name="Edman J.C."/>
            <person name="Edman U."/>
            <person name="Cao M."/>
            <person name="Lundgren B."/>
            <person name="Kovacs J."/>
            <person name="Santi D.V."/>
        </authorList>
    </citation>
    <scope>NUCLEOTIDE SEQUENCE [GENOMIC DNA / MRNA]</scope>
</reference>
<reference key="2">
    <citation type="journal article" date="1994" name="Structure">
        <title>The structure of Pneumocystis carinii dihydrofolate reductase to 1.9-A resolution.</title>
        <authorList>
            <person name="Champness J.N."/>
            <person name="Achari A."/>
            <person name="Ballantine S.P."/>
            <person name="Bryant P.K."/>
            <person name="Delves C.J."/>
            <person name="Stammers D.K."/>
        </authorList>
    </citation>
    <scope>X-RAY CRYSTALLOGRAPHY (1.86 ANGSTROMS)</scope>
</reference>
<reference key="3">
    <citation type="journal article" date="1999" name="Biochemistry">
        <title>Ligand-induced conformational changes in the crystal structures of Pneumocystis carinii dihydrofolate reductase complexes with folate and NADP+.</title>
        <authorList>
            <person name="Cody V."/>
            <person name="Galitsky N."/>
            <person name="Rak D."/>
            <person name="Luft J.R."/>
            <person name="Pangborn W."/>
            <person name="Queener S.F."/>
        </authorList>
    </citation>
    <scope>X-RAY CRYSTALLOGRAPHY (2.2 ANGSTROMS) IN COMPLEX WITH FOLATE AND NADP</scope>
</reference>
<reference key="4">
    <citation type="journal article" date="2000" name="Biochemistry">
        <title>Structural studies on bioactive compounds. 30. Crystal structure and molecular modeling studies on the Pneumocystis carinii dihydrofolate reductase cofactor complex with TAB, a highly selective antifolate.</title>
        <authorList>
            <person name="Cody V."/>
            <person name="Chan D."/>
            <person name="Galitsky N."/>
            <person name="Rak D."/>
            <person name="Luft J.R."/>
            <person name="Pangborn W."/>
            <person name="Queener S.F."/>
            <person name="Laughton C.A."/>
            <person name="Stevens M.F."/>
        </authorList>
    </citation>
    <scope>X-RAY CRYSTALLOGRAPHY (2.10 ANGSTROMS) IN COMPLEX WITH NADP AND THE SYNTHETIC INHIBITOR TAB</scope>
</reference>
<reference key="5">
    <citation type="journal article" date="2002" name="Acta Crystallogr. D">
        <title>Structure-based enzyme inhibitor design: modeling studies and crystal structure analysis of Pneumocystis carinii dihydrofolate reductase ternary complex with PT653 and NADPH.</title>
        <authorList>
            <person name="Cody V."/>
            <person name="Galitsky N."/>
            <person name="Luft J.R."/>
            <person name="Pangborn W."/>
            <person name="Rosowsky A."/>
            <person name="Queener S.F."/>
        </authorList>
    </citation>
    <scope>X-RAY CRYSTALLOGRAPHY (2.30 ANGSTROMS) IN COMPLEX WITH PT653 AND NADPH</scope>
</reference>
<reference key="6">
    <citation type="journal article" date="2002" name="Acta Crystallogr. D">
        <title>Analysis of quinazoline and pyrido[2,3-d]pyrimidine N9-C10 reversed-bridge antifolates in complex with NADP+ and Pneumocystis carinii dihydrofolate reductase.</title>
        <authorList>
            <person name="Cody V."/>
            <person name="Galitsky N."/>
            <person name="Luft J.R."/>
            <person name="Pangborn W."/>
            <person name="Queener S.F."/>
            <person name="Gangjee A."/>
        </authorList>
    </citation>
    <scope>X-RAY CRYSTALLOGRAPHY (1.90 ANGSTROMS) IN COMPLEX WITH INHIBITOR AND NADPH</scope>
</reference>
<reference key="7">
    <citation type="journal article" date="2004" name="Acta Crystallogr. D">
        <title>Structure determination of tetrahydroquinazoline antifolates in complex with human and Pneumocystis carinii dihydrofolate reductase: correlations between enzyme selectivity and stereochemistry.</title>
        <authorList>
            <person name="Cody V."/>
            <person name="Luft J.R."/>
            <person name="Pangborn W."/>
            <person name="Gangjee A."/>
            <person name="Queener S.F."/>
        </authorList>
    </citation>
    <scope>X-RAY CRYSTALLOGRAPHY (2.25 ANGSTROMS) IN COMPLEX WITH SYNTHETIC INHIBITOR</scope>
</reference>
<reference key="8">
    <citation type="journal article" date="2006" name="Proteins">
        <title>New insights into DHFR interactions: analysis of Pneumocystis carinii and mouse DHFR complexes with NADPH and two highly potent 5-(omega-carboxy(alkyloxy) trimethoprim derivatives reveals conformational correlations with activity and novel parallel ring stacking interactions.</title>
        <authorList>
            <person name="Cody V."/>
            <person name="Pace J."/>
            <person name="Chisum K."/>
            <person name="Rosowsky A."/>
        </authorList>
    </citation>
    <scope>X-RAY CRYSTALLOGRAPHY (1.60 ANGSTROMS) IN COMPLEX WITH INHIBITOR AND NADPH</scope>
</reference>
<keyword id="KW-0002">3D-structure</keyword>
<keyword id="KW-0521">NADP</keyword>
<keyword id="KW-0554">One-carbon metabolism</keyword>
<keyword id="KW-0560">Oxidoreductase</keyword>
<comment type="function">
    <text>Key enzyme in folate metabolism. Catalyzes an essential reaction for de novo glycine and purine synthesis, and for DNA precursor synthesis.</text>
</comment>
<comment type="catalytic activity">
    <reaction evidence="1">
        <text>(6S)-5,6,7,8-tetrahydrofolate + NADP(+) = 7,8-dihydrofolate + NADPH + H(+)</text>
        <dbReference type="Rhea" id="RHEA:15009"/>
        <dbReference type="ChEBI" id="CHEBI:15378"/>
        <dbReference type="ChEBI" id="CHEBI:57451"/>
        <dbReference type="ChEBI" id="CHEBI:57453"/>
        <dbReference type="ChEBI" id="CHEBI:57783"/>
        <dbReference type="ChEBI" id="CHEBI:58349"/>
        <dbReference type="EC" id="1.5.1.3"/>
    </reaction>
</comment>
<comment type="pathway">
    <text>Cofactor biosynthesis; tetrahydrofolate biosynthesis; 5,6,7,8-tetrahydrofolate from 7,8-dihydrofolate: step 1/1.</text>
</comment>
<comment type="similarity">
    <text evidence="7">Belongs to the dihydrofolate reductase family.</text>
</comment>
<name>DYR_PNECA</name>
<organism>
    <name type="scientific">Pneumocystis carinii</name>
    <dbReference type="NCBI Taxonomy" id="4754"/>
    <lineage>
        <taxon>Eukaryota</taxon>
        <taxon>Fungi</taxon>
        <taxon>Dikarya</taxon>
        <taxon>Ascomycota</taxon>
        <taxon>Taphrinomycotina</taxon>
        <taxon>Pneumocystomycetes</taxon>
        <taxon>Pneumocystaceae</taxon>
        <taxon>Pneumocystis</taxon>
    </lineage>
</organism>
<protein>
    <recommendedName>
        <fullName>Dihydrofolate reductase</fullName>
        <ecNumber>1.5.1.3</ecNumber>
    </recommendedName>
</protein>
<proteinExistence type="evidence at protein level"/>